<reference key="1">
    <citation type="journal article" date="2009" name="Genome Res.">
        <title>Comparative genomics of the fungal pathogens Candida dubliniensis and Candida albicans.</title>
        <authorList>
            <person name="Jackson A.P."/>
            <person name="Gamble J.A."/>
            <person name="Yeomans T."/>
            <person name="Moran G.P."/>
            <person name="Saunders D."/>
            <person name="Harris D."/>
            <person name="Aslett M."/>
            <person name="Barrell J.F."/>
            <person name="Butler G."/>
            <person name="Citiulo F."/>
            <person name="Coleman D.C."/>
            <person name="de Groot P.W.J."/>
            <person name="Goodwin T.J."/>
            <person name="Quail M.A."/>
            <person name="McQuillan J."/>
            <person name="Munro C.A."/>
            <person name="Pain A."/>
            <person name="Poulter R.T."/>
            <person name="Rajandream M.A."/>
            <person name="Renauld H."/>
            <person name="Spiering M.J."/>
            <person name="Tivey A."/>
            <person name="Gow N.A.R."/>
            <person name="Barrell B."/>
            <person name="Sullivan D.J."/>
            <person name="Berriman M."/>
        </authorList>
    </citation>
    <scope>NUCLEOTIDE SEQUENCE [LARGE SCALE GENOMIC DNA]</scope>
    <source>
        <strain>CD36 / ATCC MYA-646 / CBS 7987 / NCPF 3949 / NRRL Y-17841</strain>
    </source>
</reference>
<keyword id="KW-0004">4Fe-4S</keyword>
<keyword id="KW-0408">Iron</keyword>
<keyword id="KW-0411">Iron-sulfur</keyword>
<keyword id="KW-0479">Metal-binding</keyword>
<gene>
    <name type="primary">NAR1</name>
    <name type="ORF">CD36_08500</name>
</gene>
<organism>
    <name type="scientific">Candida dubliniensis (strain CD36 / ATCC MYA-646 / CBS 7987 / NCPF 3949 / NRRL Y-17841)</name>
    <name type="common">Yeast</name>
    <dbReference type="NCBI Taxonomy" id="573826"/>
    <lineage>
        <taxon>Eukaryota</taxon>
        <taxon>Fungi</taxon>
        <taxon>Dikarya</taxon>
        <taxon>Ascomycota</taxon>
        <taxon>Saccharomycotina</taxon>
        <taxon>Pichiomycetes</taxon>
        <taxon>Debaryomycetaceae</taxon>
        <taxon>Candida/Lodderomyces clade</taxon>
        <taxon>Candida</taxon>
    </lineage>
</organism>
<name>NAR1_CANDC</name>
<evidence type="ECO:0000250" key="1"/>
<evidence type="ECO:0000255" key="2"/>
<evidence type="ECO:0000305" key="3"/>
<protein>
    <recommendedName>
        <fullName>Cytosolic Fe-S cluster assembly factor NAR1</fullName>
    </recommendedName>
    <alternativeName>
        <fullName>Nuclear architecture-related protein 1</fullName>
    </alternativeName>
</protein>
<accession>B9W8S4</accession>
<proteinExistence type="inferred from homology"/>
<comment type="function">
    <text evidence="1">Component of the cytosolic Fe/S protein assembly machinery. Required for maturation of extramitochondrial Fe/S proteins. May play a role in the transfer of pre-assembled Fe/S clusters to target apoproteins (By similarity).</text>
</comment>
<comment type="similarity">
    <text evidence="3">Belongs to the NARF family.</text>
</comment>
<sequence length="584" mass="65021">MSALLSADDLNDFISPGVACIKPPASTNTNTNTTTTDSYNENGEVEIQIDSQGNPLEISKIDGKQIQTNQLTPAQISLADCLACSGCITSAEEVLVAQHSHQELIKALQSPTKNKVFVVSISHQSRASLAMAYNVTIEIMDKLLINLFIKQMGFTYIIGTSLGRKLSLINEAKEVINRKTEEGPILSSICPGWVLYAEKTHPYIIPKLSTIKSPQQITGCLLKNLTCEALQIDKSEIYHLSIMPCFDKKLESARPEIYDNENEEDKSISISVPDVDCVITAKELITLLEECPQYQLIPPQPTQPTLGGDLDLSVTEIYKQYAPPNWPFIEYSWSNDSGSSSGGYAYNYLNIYRNDLVLRKGYDPNKFTINLINGRNSDIYEMRLIYDSKETLASAAVVNGFRNIQNLVRKLKPNTNKSMNNKINPLVARRRARMINRGKSESISQEIEIEIADASKVDYVEIMACPNGCINGGGQINPPTTTTISNTTGLPQKEIEKQWINKVLDKYNTIPILFDLSLPSTSSSLEIMKYIEWSENFEKHFNISNDRLFKISFNPRENKSTGTATTTDDNNDPAATALLVGSKW</sequence>
<dbReference type="EMBL" id="FM992688">
    <property type="protein sequence ID" value="CAX45147.1"/>
    <property type="molecule type" value="Genomic_DNA"/>
</dbReference>
<dbReference type="RefSeq" id="XP_002417494.1">
    <property type="nucleotide sequence ID" value="XM_002417449.1"/>
</dbReference>
<dbReference type="SMR" id="B9W8S4"/>
<dbReference type="GeneID" id="8045039"/>
<dbReference type="KEGG" id="cdu:CD36_08500"/>
<dbReference type="CGD" id="CAL0000166245">
    <property type="gene designation" value="Cd36_08500"/>
</dbReference>
<dbReference type="VEuPathDB" id="FungiDB:CD36_08500"/>
<dbReference type="eggNOG" id="KOG2439">
    <property type="taxonomic scope" value="Eukaryota"/>
</dbReference>
<dbReference type="HOGENOM" id="CLU_018240_0_1_1"/>
<dbReference type="OrthoDB" id="10253113at2759"/>
<dbReference type="Proteomes" id="UP000002605">
    <property type="component" value="Chromosome 1"/>
</dbReference>
<dbReference type="GO" id="GO:0051539">
    <property type="term" value="F:4 iron, 4 sulfur cluster binding"/>
    <property type="evidence" value="ECO:0007669"/>
    <property type="project" value="UniProtKB-KW"/>
</dbReference>
<dbReference type="GO" id="GO:0051536">
    <property type="term" value="F:iron-sulfur cluster binding"/>
    <property type="evidence" value="ECO:0000250"/>
    <property type="project" value="UniProtKB"/>
</dbReference>
<dbReference type="GO" id="GO:0046872">
    <property type="term" value="F:metal ion binding"/>
    <property type="evidence" value="ECO:0007669"/>
    <property type="project" value="UniProtKB-KW"/>
</dbReference>
<dbReference type="GO" id="GO:0016226">
    <property type="term" value="P:iron-sulfur cluster assembly"/>
    <property type="evidence" value="ECO:0000250"/>
    <property type="project" value="UniProtKB"/>
</dbReference>
<dbReference type="Gene3D" id="3.40.50.1780">
    <property type="match status" value="2"/>
</dbReference>
<dbReference type="Gene3D" id="3.40.950.10">
    <property type="entry name" value="Fe-only Hydrogenase (Larger Subunit), Chain L, domain 3"/>
    <property type="match status" value="2"/>
</dbReference>
<dbReference type="InterPro" id="IPR050340">
    <property type="entry name" value="Cytosolic_Fe-S_CAF"/>
</dbReference>
<dbReference type="InterPro" id="IPR009016">
    <property type="entry name" value="Fe_hydrogenase"/>
</dbReference>
<dbReference type="InterPro" id="IPR004108">
    <property type="entry name" value="Fe_hydrogenase_lsu_C"/>
</dbReference>
<dbReference type="PANTHER" id="PTHR11615">
    <property type="entry name" value="NITRATE, FORMATE, IRON DEHYDROGENASE"/>
    <property type="match status" value="1"/>
</dbReference>
<dbReference type="Pfam" id="PF02906">
    <property type="entry name" value="Fe_hyd_lg_C"/>
    <property type="match status" value="1"/>
</dbReference>
<dbReference type="SUPFAM" id="SSF53920">
    <property type="entry name" value="Fe-only hydrogenase"/>
    <property type="match status" value="1"/>
</dbReference>
<feature type="chain" id="PRO_0000383722" description="Cytosolic Fe-S cluster assembly factor NAR1">
    <location>
        <begin position="1"/>
        <end position="584"/>
    </location>
</feature>
<feature type="binding site" evidence="2">
    <location>
        <position position="20"/>
    </location>
    <ligand>
        <name>[4Fe-4S] cluster</name>
        <dbReference type="ChEBI" id="CHEBI:49883"/>
        <label>1</label>
    </ligand>
</feature>
<feature type="binding site" evidence="2">
    <location>
        <position position="81"/>
    </location>
    <ligand>
        <name>[4Fe-4S] cluster</name>
        <dbReference type="ChEBI" id="CHEBI:49883"/>
        <label>1</label>
    </ligand>
</feature>
<feature type="binding site" evidence="2">
    <location>
        <position position="84"/>
    </location>
    <ligand>
        <name>[4Fe-4S] cluster</name>
        <dbReference type="ChEBI" id="CHEBI:49883"/>
        <label>1</label>
    </ligand>
</feature>
<feature type="binding site" evidence="2">
    <location>
        <position position="87"/>
    </location>
    <ligand>
        <name>[4Fe-4S] cluster</name>
        <dbReference type="ChEBI" id="CHEBI:49883"/>
        <label>1</label>
    </ligand>
</feature>
<feature type="binding site" evidence="2">
    <location>
        <position position="190"/>
    </location>
    <ligand>
        <name>[4Fe-4S] cluster</name>
        <dbReference type="ChEBI" id="CHEBI:49883"/>
        <label>2</label>
    </ligand>
</feature>
<feature type="binding site" evidence="2">
    <location>
        <position position="245"/>
    </location>
    <ligand>
        <name>[4Fe-4S] cluster</name>
        <dbReference type="ChEBI" id="CHEBI:49883"/>
        <label>2</label>
    </ligand>
</feature>
<feature type="binding site" evidence="2">
    <location>
        <position position="465"/>
    </location>
    <ligand>
        <name>[4Fe-4S] cluster</name>
        <dbReference type="ChEBI" id="CHEBI:49883"/>
        <label>2</label>
    </ligand>
</feature>
<feature type="binding site" evidence="2">
    <location>
        <position position="469"/>
    </location>
    <ligand>
        <name>[4Fe-4S] cluster</name>
        <dbReference type="ChEBI" id="CHEBI:49883"/>
        <label>2</label>
    </ligand>
</feature>